<accession>Q9WUM5</accession>
<accession>Q8C2C3</accession>
<accession>Q9DBA3</accession>
<accession>Q9DCI8</accession>
<dbReference type="EC" id="6.2.1.4" evidence="1"/>
<dbReference type="EC" id="6.2.1.5" evidence="1"/>
<dbReference type="EMBL" id="AK002754">
    <property type="protein sequence ID" value="BAB22331.1"/>
    <property type="status" value="ALT_INIT"/>
    <property type="molecule type" value="mRNA"/>
</dbReference>
<dbReference type="EMBL" id="AK005080">
    <property type="protein sequence ID" value="BAB23804.1"/>
    <property type="status" value="ALT_INIT"/>
    <property type="molecule type" value="mRNA"/>
</dbReference>
<dbReference type="EMBL" id="AK088888">
    <property type="protein sequence ID" value="BAC40634.1"/>
    <property type="status" value="ALT_INIT"/>
    <property type="molecule type" value="mRNA"/>
</dbReference>
<dbReference type="EMBL" id="AF144101">
    <property type="protein sequence ID" value="AAD33927.2"/>
    <property type="status" value="ALT_INIT"/>
    <property type="molecule type" value="mRNA"/>
</dbReference>
<dbReference type="EMBL" id="BC011087">
    <property type="protein sequence ID" value="AAH11087.1"/>
    <property type="status" value="ALT_INIT"/>
    <property type="molecule type" value="mRNA"/>
</dbReference>
<dbReference type="CCDS" id="CCDS20246.2"/>
<dbReference type="RefSeq" id="NP_063932.2">
    <property type="nucleotide sequence ID" value="NM_019879.3"/>
</dbReference>
<dbReference type="SMR" id="Q9WUM5"/>
<dbReference type="BioGRID" id="207990">
    <property type="interactions" value="65"/>
</dbReference>
<dbReference type="CORUM" id="Q9WUM5"/>
<dbReference type="FunCoup" id="Q9WUM5">
    <property type="interactions" value="1957"/>
</dbReference>
<dbReference type="IntAct" id="Q9WUM5">
    <property type="interactions" value="7"/>
</dbReference>
<dbReference type="MINT" id="Q9WUM5"/>
<dbReference type="STRING" id="10090.ENSMUSP00000065113"/>
<dbReference type="GlyGen" id="Q9WUM5">
    <property type="glycosylation" value="1 site, 1 O-linked glycan (1 site)"/>
</dbReference>
<dbReference type="iPTMnet" id="Q9WUM5"/>
<dbReference type="PhosphoSitePlus" id="Q9WUM5"/>
<dbReference type="SwissPalm" id="Q9WUM5"/>
<dbReference type="jPOST" id="Q9WUM5"/>
<dbReference type="PaxDb" id="10090-ENSMUSP00000065113"/>
<dbReference type="PeptideAtlas" id="Q9WUM5"/>
<dbReference type="ProteomicsDB" id="257473"/>
<dbReference type="Pumba" id="Q9WUM5"/>
<dbReference type="Antibodypedia" id="47488">
    <property type="antibodies" value="120 antibodies from 29 providers"/>
</dbReference>
<dbReference type="DNASU" id="56451"/>
<dbReference type="Ensembl" id="ENSMUST00000064740.9">
    <property type="protein sequence ID" value="ENSMUSP00000065113.7"/>
    <property type="gene ID" value="ENSMUSG00000052738.15"/>
</dbReference>
<dbReference type="GeneID" id="56451"/>
<dbReference type="KEGG" id="mmu:56451"/>
<dbReference type="UCSC" id="uc009cjm.2">
    <property type="organism name" value="mouse"/>
</dbReference>
<dbReference type="AGR" id="MGI:1927234"/>
<dbReference type="CTD" id="8802"/>
<dbReference type="MGI" id="MGI:1927234">
    <property type="gene designation" value="Suclg1"/>
</dbReference>
<dbReference type="VEuPathDB" id="HostDB:ENSMUSG00000052738"/>
<dbReference type="eggNOG" id="KOG1255">
    <property type="taxonomic scope" value="Eukaryota"/>
</dbReference>
<dbReference type="GeneTree" id="ENSGT00940000156351"/>
<dbReference type="HOGENOM" id="CLU_052104_1_0_1"/>
<dbReference type="InParanoid" id="Q9WUM5"/>
<dbReference type="OMA" id="VIICITE"/>
<dbReference type="OrthoDB" id="1664372at2759"/>
<dbReference type="PhylomeDB" id="Q9WUM5"/>
<dbReference type="TreeFam" id="TF300666"/>
<dbReference type="Reactome" id="R-MMU-71403">
    <property type="pathway name" value="Citric acid cycle (TCA cycle)"/>
</dbReference>
<dbReference type="UniPathway" id="UPA00223">
    <property type="reaction ID" value="UER00999"/>
</dbReference>
<dbReference type="BioGRID-ORCS" id="56451">
    <property type="hits" value="7 hits in 80 CRISPR screens"/>
</dbReference>
<dbReference type="CD-CODE" id="CE726F99">
    <property type="entry name" value="Postsynaptic density"/>
</dbReference>
<dbReference type="ChiTaRS" id="Suclg1">
    <property type="organism name" value="mouse"/>
</dbReference>
<dbReference type="PRO" id="PR:Q9WUM5"/>
<dbReference type="Proteomes" id="UP000000589">
    <property type="component" value="Chromosome 6"/>
</dbReference>
<dbReference type="RNAct" id="Q9WUM5">
    <property type="molecule type" value="protein"/>
</dbReference>
<dbReference type="Bgee" id="ENSMUSG00000052738">
    <property type="expression patterns" value="Expressed in interventricular septum and 271 other cell types or tissues"/>
</dbReference>
<dbReference type="ExpressionAtlas" id="Q9WUM5">
    <property type="expression patterns" value="baseline and differential"/>
</dbReference>
<dbReference type="GO" id="GO:0005743">
    <property type="term" value="C:mitochondrial inner membrane"/>
    <property type="evidence" value="ECO:0007005"/>
    <property type="project" value="MGI"/>
</dbReference>
<dbReference type="GO" id="GO:0005739">
    <property type="term" value="C:mitochondrion"/>
    <property type="evidence" value="ECO:0007005"/>
    <property type="project" value="MGI"/>
</dbReference>
<dbReference type="GO" id="GO:0045244">
    <property type="term" value="C:succinate-CoA ligase complex (GDP-forming)"/>
    <property type="evidence" value="ECO:0007669"/>
    <property type="project" value="Ensembl"/>
</dbReference>
<dbReference type="GO" id="GO:0000166">
    <property type="term" value="F:nucleotide binding"/>
    <property type="evidence" value="ECO:0007669"/>
    <property type="project" value="UniProtKB-KW"/>
</dbReference>
<dbReference type="GO" id="GO:0004775">
    <property type="term" value="F:succinate-CoA ligase (ADP-forming) activity"/>
    <property type="evidence" value="ECO:0007669"/>
    <property type="project" value="UniProtKB-UniRule"/>
</dbReference>
<dbReference type="GO" id="GO:0004776">
    <property type="term" value="F:succinate-CoA ligase (GDP-forming) activity"/>
    <property type="evidence" value="ECO:0007669"/>
    <property type="project" value="UniProtKB-EC"/>
</dbReference>
<dbReference type="GO" id="GO:0006099">
    <property type="term" value="P:tricarboxylic acid cycle"/>
    <property type="evidence" value="ECO:0007669"/>
    <property type="project" value="UniProtKB-UniRule"/>
</dbReference>
<dbReference type="FunFam" id="3.40.50.720:FF:000002">
    <property type="entry name" value="Succinate--CoA ligase [ADP-forming] subunit alpha"/>
    <property type="match status" value="1"/>
</dbReference>
<dbReference type="FunFam" id="3.40.50.261:FF:000005">
    <property type="entry name" value="Succinate--CoA ligase [ADP-forming] subunit alpha, mitochondrial"/>
    <property type="match status" value="1"/>
</dbReference>
<dbReference type="Gene3D" id="3.40.50.720">
    <property type="entry name" value="NAD(P)-binding Rossmann-like Domain"/>
    <property type="match status" value="1"/>
</dbReference>
<dbReference type="Gene3D" id="3.40.50.261">
    <property type="entry name" value="Succinyl-CoA synthetase domains"/>
    <property type="match status" value="1"/>
</dbReference>
<dbReference type="HAMAP" id="MF_01988">
    <property type="entry name" value="Succ_CoA_alpha"/>
    <property type="match status" value="1"/>
</dbReference>
<dbReference type="InterPro" id="IPR017440">
    <property type="entry name" value="Cit_synth/succinyl-CoA_lig_AS"/>
</dbReference>
<dbReference type="InterPro" id="IPR033847">
    <property type="entry name" value="Citrt_syn/SCS-alpha_CS"/>
</dbReference>
<dbReference type="InterPro" id="IPR003781">
    <property type="entry name" value="CoA-bd"/>
</dbReference>
<dbReference type="InterPro" id="IPR005810">
    <property type="entry name" value="CoA_lig_alpha"/>
</dbReference>
<dbReference type="InterPro" id="IPR036291">
    <property type="entry name" value="NAD(P)-bd_dom_sf"/>
</dbReference>
<dbReference type="InterPro" id="IPR005811">
    <property type="entry name" value="SUCC_ACL_C"/>
</dbReference>
<dbReference type="InterPro" id="IPR016102">
    <property type="entry name" value="Succinyl-CoA_synth-like"/>
</dbReference>
<dbReference type="NCBIfam" id="NF004230">
    <property type="entry name" value="PRK05678.1"/>
    <property type="match status" value="1"/>
</dbReference>
<dbReference type="NCBIfam" id="TIGR01019">
    <property type="entry name" value="sucCoAalpha"/>
    <property type="match status" value="1"/>
</dbReference>
<dbReference type="PANTHER" id="PTHR11117:SF2">
    <property type="entry name" value="SUCCINATE--COA LIGASE [ADP_GDP-FORMING] SUBUNIT ALPHA, MITOCHONDRIAL"/>
    <property type="match status" value="1"/>
</dbReference>
<dbReference type="PANTHER" id="PTHR11117">
    <property type="entry name" value="SUCCINYL-COA LIGASE SUBUNIT ALPHA"/>
    <property type="match status" value="1"/>
</dbReference>
<dbReference type="Pfam" id="PF02629">
    <property type="entry name" value="CoA_binding"/>
    <property type="match status" value="1"/>
</dbReference>
<dbReference type="Pfam" id="PF00549">
    <property type="entry name" value="Ligase_CoA"/>
    <property type="match status" value="1"/>
</dbReference>
<dbReference type="PIRSF" id="PIRSF001553">
    <property type="entry name" value="SucCS_alpha"/>
    <property type="match status" value="1"/>
</dbReference>
<dbReference type="PRINTS" id="PR01798">
    <property type="entry name" value="SCOASYNTHASE"/>
</dbReference>
<dbReference type="SMART" id="SM00881">
    <property type="entry name" value="CoA_binding"/>
    <property type="match status" value="1"/>
</dbReference>
<dbReference type="SUPFAM" id="SSF51735">
    <property type="entry name" value="NAD(P)-binding Rossmann-fold domains"/>
    <property type="match status" value="1"/>
</dbReference>
<dbReference type="SUPFAM" id="SSF52210">
    <property type="entry name" value="Succinyl-CoA synthetase domains"/>
    <property type="match status" value="1"/>
</dbReference>
<dbReference type="PROSITE" id="PS01216">
    <property type="entry name" value="SUCCINYL_COA_LIG_1"/>
    <property type="match status" value="1"/>
</dbReference>
<dbReference type="PROSITE" id="PS00399">
    <property type="entry name" value="SUCCINYL_COA_LIG_2"/>
    <property type="match status" value="1"/>
</dbReference>
<organism>
    <name type="scientific">Mus musculus</name>
    <name type="common">Mouse</name>
    <dbReference type="NCBI Taxonomy" id="10090"/>
    <lineage>
        <taxon>Eukaryota</taxon>
        <taxon>Metazoa</taxon>
        <taxon>Chordata</taxon>
        <taxon>Craniata</taxon>
        <taxon>Vertebrata</taxon>
        <taxon>Euteleostomi</taxon>
        <taxon>Mammalia</taxon>
        <taxon>Eutheria</taxon>
        <taxon>Euarchontoglires</taxon>
        <taxon>Glires</taxon>
        <taxon>Rodentia</taxon>
        <taxon>Myomorpha</taxon>
        <taxon>Muroidea</taxon>
        <taxon>Muridae</taxon>
        <taxon>Murinae</taxon>
        <taxon>Mus</taxon>
        <taxon>Mus</taxon>
    </lineage>
</organism>
<comment type="function">
    <text evidence="1">Succinyl-CoA synthetase functions in the citric acid cycle (TCA), coupling the hydrolysis of succinyl-CoA to the synthesis of either ATP or GTP and thus represents the only step of substrate-level phosphorylation in the TCA. The alpha subunit of the enzyme binds the substrates coenzyme A and phosphate, while succinate binding and specificity for either ATP or GTP is provided by different beta subunits.</text>
</comment>
<comment type="catalytic activity">
    <reaction evidence="1">
        <text>succinate + ATP + CoA = succinyl-CoA + ADP + phosphate</text>
        <dbReference type="Rhea" id="RHEA:17661"/>
        <dbReference type="ChEBI" id="CHEBI:30031"/>
        <dbReference type="ChEBI" id="CHEBI:30616"/>
        <dbReference type="ChEBI" id="CHEBI:43474"/>
        <dbReference type="ChEBI" id="CHEBI:57287"/>
        <dbReference type="ChEBI" id="CHEBI:57292"/>
        <dbReference type="ChEBI" id="CHEBI:456216"/>
        <dbReference type="EC" id="6.2.1.5"/>
    </reaction>
</comment>
<comment type="catalytic activity">
    <reaction evidence="1">
        <text>GTP + succinate + CoA = succinyl-CoA + GDP + phosphate</text>
        <dbReference type="Rhea" id="RHEA:22120"/>
        <dbReference type="ChEBI" id="CHEBI:30031"/>
        <dbReference type="ChEBI" id="CHEBI:37565"/>
        <dbReference type="ChEBI" id="CHEBI:43474"/>
        <dbReference type="ChEBI" id="CHEBI:57287"/>
        <dbReference type="ChEBI" id="CHEBI:57292"/>
        <dbReference type="ChEBI" id="CHEBI:58189"/>
        <dbReference type="EC" id="6.2.1.4"/>
    </reaction>
</comment>
<comment type="pathway">
    <text evidence="1">Carbohydrate metabolism; tricarboxylic acid cycle; succinate from succinyl-CoA (ligase route): step 1/1.</text>
</comment>
<comment type="subunit">
    <text evidence="1">Heterodimer of an alpha and a beta subunit. Different beta subunits determine nucleotide specificity. Together with the ATP-specific beta subunit SUCLA2, forms an ADP-forming succinyl-CoA synthetase (A-SCS). Together with the GTP-specific beta subunit SUCLG2 forms a GDP-forming succinyl-CoA synthetase (G-SCS).</text>
</comment>
<comment type="subcellular location">
    <subcellularLocation>
        <location evidence="1">Mitochondrion</location>
    </subcellularLocation>
</comment>
<comment type="similarity">
    <text evidence="1">Belongs to the succinate/malate CoA ligase alpha subunit family.</text>
</comment>
<comment type="sequence caution" evidence="2">
    <conflict type="erroneous initiation">
        <sequence resource="EMBL-CDS" id="AAD33927"/>
    </conflict>
</comment>
<comment type="sequence caution" evidence="2">
    <conflict type="erroneous initiation">
        <sequence resource="EMBL-CDS" id="AAH11087"/>
    </conflict>
</comment>
<comment type="sequence caution" evidence="2">
    <conflict type="erroneous initiation">
        <sequence resource="EMBL-CDS" id="BAB22331"/>
    </conflict>
</comment>
<comment type="sequence caution" evidence="2">
    <conflict type="erroneous initiation">
        <sequence resource="EMBL-CDS" id="BAB23804"/>
    </conflict>
</comment>
<comment type="sequence caution" evidence="2">
    <conflict type="erroneous initiation">
        <sequence resource="EMBL-CDS" id="BAC40634"/>
    </conflict>
</comment>
<protein>
    <recommendedName>
        <fullName evidence="1">Succinate--CoA ligase [ADP/GDP-forming] subunit alpha, mitochondrial</fullName>
        <ecNumber evidence="1">6.2.1.4</ecNumber>
        <ecNumber evidence="1">6.2.1.5</ecNumber>
    </recommendedName>
    <alternativeName>
        <fullName evidence="1">Succinyl-CoA synthetase subunit alpha</fullName>
        <shortName evidence="1">SCS-alpha</shortName>
    </alternativeName>
</protein>
<name>SUCA_MOUSE</name>
<sequence>MTATVVAAAATATMVSSSSGLAAARLLSRTFLLQQNGIRHGSYTASRKHIYIDKNTKIICQGFTGKQGTFHSQQALEYGTKLVGGTTPGKGGQKHLGLPVFNTVKEAKEKTGATASVIYVPPPFAAAAINEAIDAEIPLVVCITEGIPQQDMVRVKHRLTRQGTTRLIGPNCPGVINPGECKIGIMPGHIHKKGRIGIVSRSGTLTYEAVHQTTQVGLGQSLCIGIGGDPFNGTDFIDCLEVFLNDPATEGIILIGEIGGHAEENAAAFLKEHNSGPKAKPVVSFIAGITAPPGRRMGHAGAIIAGGKGGAKEKISALQSAGVVVSMSPAQLGTTIYKEFEKRKML</sequence>
<feature type="transit peptide" description="Mitochondrion" evidence="1">
    <location>
        <begin position="1"/>
        <end position="34"/>
    </location>
</feature>
<feature type="chain" id="PRO_0000033341" description="Succinate--CoA ligase [ADP/GDP-forming] subunit alpha, mitochondrial" evidence="1">
    <location>
        <begin position="35"/>
        <end position="346"/>
    </location>
</feature>
<feature type="active site" description="Tele-phosphohistidine intermediate" evidence="1">
    <location>
        <position position="299"/>
    </location>
</feature>
<feature type="binding site" evidence="1">
    <location>
        <begin position="64"/>
        <end position="67"/>
    </location>
    <ligand>
        <name>CoA</name>
        <dbReference type="ChEBI" id="CHEBI:57287"/>
    </ligand>
</feature>
<feature type="binding site" evidence="1">
    <location>
        <position position="90"/>
    </location>
    <ligand>
        <name>CoA</name>
        <dbReference type="ChEBI" id="CHEBI:57287"/>
    </ligand>
</feature>
<feature type="binding site" evidence="1">
    <location>
        <begin position="143"/>
        <end position="145"/>
    </location>
    <ligand>
        <name>CoA</name>
        <dbReference type="ChEBI" id="CHEBI:57287"/>
    </ligand>
</feature>
<feature type="binding site" evidence="1">
    <location>
        <position position="207"/>
    </location>
    <ligand>
        <name>substrate</name>
        <note>ligand shared with subunit beta</note>
    </ligand>
</feature>
<feature type="modified residue" description="N6-acetyllysine" evidence="3">
    <location>
        <position position="54"/>
    </location>
</feature>
<feature type="modified residue" description="N6-acetyllysine; alternate" evidence="3">
    <location>
        <position position="57"/>
    </location>
</feature>
<feature type="modified residue" description="N6-succinyllysine; alternate" evidence="4">
    <location>
        <position position="57"/>
    </location>
</feature>
<feature type="modified residue" description="N6-acetyllysine; alternate" evidence="3">
    <location>
        <position position="66"/>
    </location>
</feature>
<feature type="modified residue" description="N6-succinyllysine; alternate" evidence="4">
    <location>
        <position position="66"/>
    </location>
</feature>
<feature type="modified residue" description="N6-acetyllysine" evidence="3">
    <location>
        <position position="81"/>
    </location>
</feature>
<feature type="modified residue" description="N6-acetyllysine" evidence="3">
    <location>
        <position position="94"/>
    </location>
</feature>
<feature type="modified residue" description="N6-acetyllysine" evidence="3">
    <location>
        <position position="105"/>
    </location>
</feature>
<feature type="modified residue" description="N6-succinyllysine" evidence="4">
    <location>
        <position position="338"/>
    </location>
</feature>
<feature type="sequence conflict" description="In Ref. 2; AAD33927." evidence="2" ref="2">
    <original>V</original>
    <variation>L</variation>
    <location>
        <position position="6"/>
    </location>
</feature>
<feature type="sequence conflict" description="In Ref. 1; BAC40634." evidence="2" ref="1">
    <original>V</original>
    <variation>I</variation>
    <location>
        <position position="175"/>
    </location>
</feature>
<feature type="sequence conflict" description="In Ref. 1; BAB22331." evidence="2" ref="1">
    <original>G</original>
    <variation>A</variation>
    <location>
        <position position="188"/>
    </location>
</feature>
<feature type="sequence conflict" description="In Ref. 2; AAD33927." evidence="2" ref="2">
    <original>R</original>
    <variation>K</variation>
    <location>
        <position position="201"/>
    </location>
</feature>
<feature type="sequence conflict" description="In Ref. 2; AAD33927." evidence="2" ref="2">
    <original>Q</original>
    <variation>H</variation>
    <location>
        <position position="220"/>
    </location>
</feature>
<evidence type="ECO:0000255" key="1">
    <source>
        <dbReference type="HAMAP-Rule" id="MF_03222"/>
    </source>
</evidence>
<evidence type="ECO:0000305" key="2"/>
<evidence type="ECO:0007744" key="3">
    <source>
    </source>
</evidence>
<evidence type="ECO:0007744" key="4">
    <source>
    </source>
</evidence>
<proteinExistence type="evidence at protein level"/>
<reference key="1">
    <citation type="journal article" date="2005" name="Science">
        <title>The transcriptional landscape of the mammalian genome.</title>
        <authorList>
            <person name="Carninci P."/>
            <person name="Kasukawa T."/>
            <person name="Katayama S."/>
            <person name="Gough J."/>
            <person name="Frith M.C."/>
            <person name="Maeda N."/>
            <person name="Oyama R."/>
            <person name="Ravasi T."/>
            <person name="Lenhard B."/>
            <person name="Wells C."/>
            <person name="Kodzius R."/>
            <person name="Shimokawa K."/>
            <person name="Bajic V.B."/>
            <person name="Brenner S.E."/>
            <person name="Batalov S."/>
            <person name="Forrest A.R."/>
            <person name="Zavolan M."/>
            <person name="Davis M.J."/>
            <person name="Wilming L.G."/>
            <person name="Aidinis V."/>
            <person name="Allen J.E."/>
            <person name="Ambesi-Impiombato A."/>
            <person name="Apweiler R."/>
            <person name="Aturaliya R.N."/>
            <person name="Bailey T.L."/>
            <person name="Bansal M."/>
            <person name="Baxter L."/>
            <person name="Beisel K.W."/>
            <person name="Bersano T."/>
            <person name="Bono H."/>
            <person name="Chalk A.M."/>
            <person name="Chiu K.P."/>
            <person name="Choudhary V."/>
            <person name="Christoffels A."/>
            <person name="Clutterbuck D.R."/>
            <person name="Crowe M.L."/>
            <person name="Dalla E."/>
            <person name="Dalrymple B.P."/>
            <person name="de Bono B."/>
            <person name="Della Gatta G."/>
            <person name="di Bernardo D."/>
            <person name="Down T."/>
            <person name="Engstrom P."/>
            <person name="Fagiolini M."/>
            <person name="Faulkner G."/>
            <person name="Fletcher C.F."/>
            <person name="Fukushima T."/>
            <person name="Furuno M."/>
            <person name="Futaki S."/>
            <person name="Gariboldi M."/>
            <person name="Georgii-Hemming P."/>
            <person name="Gingeras T.R."/>
            <person name="Gojobori T."/>
            <person name="Green R.E."/>
            <person name="Gustincich S."/>
            <person name="Harbers M."/>
            <person name="Hayashi Y."/>
            <person name="Hensch T.K."/>
            <person name="Hirokawa N."/>
            <person name="Hill D."/>
            <person name="Huminiecki L."/>
            <person name="Iacono M."/>
            <person name="Ikeo K."/>
            <person name="Iwama A."/>
            <person name="Ishikawa T."/>
            <person name="Jakt M."/>
            <person name="Kanapin A."/>
            <person name="Katoh M."/>
            <person name="Kawasawa Y."/>
            <person name="Kelso J."/>
            <person name="Kitamura H."/>
            <person name="Kitano H."/>
            <person name="Kollias G."/>
            <person name="Krishnan S.P."/>
            <person name="Kruger A."/>
            <person name="Kummerfeld S.K."/>
            <person name="Kurochkin I.V."/>
            <person name="Lareau L.F."/>
            <person name="Lazarevic D."/>
            <person name="Lipovich L."/>
            <person name="Liu J."/>
            <person name="Liuni S."/>
            <person name="McWilliam S."/>
            <person name="Madan Babu M."/>
            <person name="Madera M."/>
            <person name="Marchionni L."/>
            <person name="Matsuda H."/>
            <person name="Matsuzawa S."/>
            <person name="Miki H."/>
            <person name="Mignone F."/>
            <person name="Miyake S."/>
            <person name="Morris K."/>
            <person name="Mottagui-Tabar S."/>
            <person name="Mulder N."/>
            <person name="Nakano N."/>
            <person name="Nakauchi H."/>
            <person name="Ng P."/>
            <person name="Nilsson R."/>
            <person name="Nishiguchi S."/>
            <person name="Nishikawa S."/>
            <person name="Nori F."/>
            <person name="Ohara O."/>
            <person name="Okazaki Y."/>
            <person name="Orlando V."/>
            <person name="Pang K.C."/>
            <person name="Pavan W.J."/>
            <person name="Pavesi G."/>
            <person name="Pesole G."/>
            <person name="Petrovsky N."/>
            <person name="Piazza S."/>
            <person name="Reed J."/>
            <person name="Reid J.F."/>
            <person name="Ring B.Z."/>
            <person name="Ringwald M."/>
            <person name="Rost B."/>
            <person name="Ruan Y."/>
            <person name="Salzberg S.L."/>
            <person name="Sandelin A."/>
            <person name="Schneider C."/>
            <person name="Schoenbach C."/>
            <person name="Sekiguchi K."/>
            <person name="Semple C.A."/>
            <person name="Seno S."/>
            <person name="Sessa L."/>
            <person name="Sheng Y."/>
            <person name="Shibata Y."/>
            <person name="Shimada H."/>
            <person name="Shimada K."/>
            <person name="Silva D."/>
            <person name="Sinclair B."/>
            <person name="Sperling S."/>
            <person name="Stupka E."/>
            <person name="Sugiura K."/>
            <person name="Sultana R."/>
            <person name="Takenaka Y."/>
            <person name="Taki K."/>
            <person name="Tammoja K."/>
            <person name="Tan S.L."/>
            <person name="Tang S."/>
            <person name="Taylor M.S."/>
            <person name="Tegner J."/>
            <person name="Teichmann S.A."/>
            <person name="Ueda H.R."/>
            <person name="van Nimwegen E."/>
            <person name="Verardo R."/>
            <person name="Wei C.L."/>
            <person name="Yagi K."/>
            <person name="Yamanishi H."/>
            <person name="Zabarovsky E."/>
            <person name="Zhu S."/>
            <person name="Zimmer A."/>
            <person name="Hide W."/>
            <person name="Bult C."/>
            <person name="Grimmond S.M."/>
            <person name="Teasdale R.D."/>
            <person name="Liu E.T."/>
            <person name="Brusic V."/>
            <person name="Quackenbush J."/>
            <person name="Wahlestedt C."/>
            <person name="Mattick J.S."/>
            <person name="Hume D.A."/>
            <person name="Kai C."/>
            <person name="Sasaki D."/>
            <person name="Tomaru Y."/>
            <person name="Fukuda S."/>
            <person name="Kanamori-Katayama M."/>
            <person name="Suzuki M."/>
            <person name="Aoki J."/>
            <person name="Arakawa T."/>
            <person name="Iida J."/>
            <person name="Imamura K."/>
            <person name="Itoh M."/>
            <person name="Kato T."/>
            <person name="Kawaji H."/>
            <person name="Kawagashira N."/>
            <person name="Kawashima T."/>
            <person name="Kojima M."/>
            <person name="Kondo S."/>
            <person name="Konno H."/>
            <person name="Nakano K."/>
            <person name="Ninomiya N."/>
            <person name="Nishio T."/>
            <person name="Okada M."/>
            <person name="Plessy C."/>
            <person name="Shibata K."/>
            <person name="Shiraki T."/>
            <person name="Suzuki S."/>
            <person name="Tagami M."/>
            <person name="Waki K."/>
            <person name="Watahiki A."/>
            <person name="Okamura-Oho Y."/>
            <person name="Suzuki H."/>
            <person name="Kawai J."/>
            <person name="Hayashizaki Y."/>
        </authorList>
    </citation>
    <scope>NUCLEOTIDE SEQUENCE [LARGE SCALE MRNA]</scope>
    <source>
        <strain>C57BL/6J</strain>
        <strain>NOD</strain>
        <tissue>Cerebellum</tissue>
        <tissue>Kidney</tissue>
        <tissue>Thymus</tissue>
    </source>
</reference>
<reference key="2">
    <citation type="submission" date="2000-07" db="EMBL/GenBank/DDBJ databases">
        <title>Sequence of the alpha subunit of succinyl-CoA synthetase in mouse.</title>
        <authorList>
            <person name="Tews K.N."/>
            <person name="Milavetz B.M."/>
            <person name="Lambeth D.O."/>
        </authorList>
    </citation>
    <scope>NUCLEOTIDE SEQUENCE [MRNA] OF 6-346</scope>
    <source>
        <tissue>Heart</tissue>
    </source>
</reference>
<reference key="3">
    <citation type="journal article" date="2004" name="Genome Res.">
        <title>The status, quality, and expansion of the NIH full-length cDNA project: the Mammalian Gene Collection (MGC).</title>
        <authorList>
            <consortium name="The MGC Project Team"/>
        </authorList>
    </citation>
    <scope>NUCLEOTIDE SEQUENCE [LARGE SCALE MRNA] OF 10-346</scope>
</reference>
<reference key="4">
    <citation type="submission" date="2009-01" db="UniProtKB">
        <authorList>
            <person name="Lubec G."/>
            <person name="Kang S.U."/>
            <person name="Sunyer B."/>
            <person name="Chen W.-Q."/>
        </authorList>
    </citation>
    <scope>PROTEIN SEQUENCE OF 45-53; 58-92; 154-169 AND 279-295</scope>
    <scope>IDENTIFICATION BY MASS SPECTROMETRY</scope>
    <source>
        <strain>C57BL/6J</strain>
        <strain>OF1</strain>
        <tissue>Brain</tissue>
        <tissue>Hippocampus</tissue>
    </source>
</reference>
<reference key="5">
    <citation type="journal article" date="2010" name="Cell">
        <title>A tissue-specific atlas of mouse protein phosphorylation and expression.</title>
        <authorList>
            <person name="Huttlin E.L."/>
            <person name="Jedrychowski M.P."/>
            <person name="Elias J.E."/>
            <person name="Goswami T."/>
            <person name="Rad R."/>
            <person name="Beausoleil S.A."/>
            <person name="Villen J."/>
            <person name="Haas W."/>
            <person name="Sowa M.E."/>
            <person name="Gygi S.P."/>
        </authorList>
    </citation>
    <scope>IDENTIFICATION BY MASS SPECTROMETRY [LARGE SCALE ANALYSIS]</scope>
    <source>
        <tissue>Brain</tissue>
        <tissue>Brown adipose tissue</tissue>
        <tissue>Heart</tissue>
        <tissue>Kidney</tissue>
        <tissue>Liver</tissue>
        <tissue>Lung</tissue>
        <tissue>Pancreas</tissue>
        <tissue>Spleen</tissue>
        <tissue>Testis</tissue>
    </source>
</reference>
<reference key="6">
    <citation type="journal article" date="2013" name="Mol. Cell">
        <title>SIRT5-mediated lysine desuccinylation impacts diverse metabolic pathways.</title>
        <authorList>
            <person name="Park J."/>
            <person name="Chen Y."/>
            <person name="Tishkoff D.X."/>
            <person name="Peng C."/>
            <person name="Tan M."/>
            <person name="Dai L."/>
            <person name="Xie Z."/>
            <person name="Zhang Y."/>
            <person name="Zwaans B.M."/>
            <person name="Skinner M.E."/>
            <person name="Lombard D.B."/>
            <person name="Zhao Y."/>
        </authorList>
    </citation>
    <scope>SUCCINYLATION [LARGE SCALE ANALYSIS] AT LYS-57; LYS-66 AND LYS-338</scope>
    <scope>IDENTIFICATION BY MASS SPECTROMETRY [LARGE SCALE ANALYSIS]</scope>
    <source>
        <tissue>Embryonic fibroblast</tissue>
        <tissue>Liver</tissue>
    </source>
</reference>
<reference key="7">
    <citation type="journal article" date="2013" name="Proc. Natl. Acad. Sci. U.S.A.">
        <title>Label-free quantitative proteomics of the lysine acetylome in mitochondria identifies substrates of SIRT3 in metabolic pathways.</title>
        <authorList>
            <person name="Rardin M.J."/>
            <person name="Newman J.C."/>
            <person name="Held J.M."/>
            <person name="Cusack M.P."/>
            <person name="Sorensen D.J."/>
            <person name="Li B."/>
            <person name="Schilling B."/>
            <person name="Mooney S.D."/>
            <person name="Kahn C.R."/>
            <person name="Verdin E."/>
            <person name="Gibson B.W."/>
        </authorList>
    </citation>
    <scope>ACETYLATION [LARGE SCALE ANALYSIS] AT LYS-54; LYS-57; LYS-66; LYS-81; LYS-94 AND LYS-105</scope>
    <scope>IDENTIFICATION BY MASS SPECTROMETRY [LARGE SCALE ANALYSIS]</scope>
    <source>
        <tissue>Liver</tissue>
    </source>
</reference>
<keyword id="KW-0007">Acetylation</keyword>
<keyword id="KW-0903">Direct protein sequencing</keyword>
<keyword id="KW-0436">Ligase</keyword>
<keyword id="KW-0496">Mitochondrion</keyword>
<keyword id="KW-0547">Nucleotide-binding</keyword>
<keyword id="KW-1185">Reference proteome</keyword>
<keyword id="KW-0809">Transit peptide</keyword>
<keyword id="KW-0816">Tricarboxylic acid cycle</keyword>
<gene>
    <name evidence="1" type="primary">Suclg1</name>
</gene>